<gene>
    <name evidence="1" type="primary">atpA</name>
    <name type="ordered locus">YpsIP31758_4178</name>
</gene>
<sequence length="513" mass="55200">MQLNSTEISELIKQRIAQFNVVSEAHNEGTIVSVSDGIIRVHGLADVMQGEMIALPGNRYAIALNLERDSVGAVVMGPYADLAEGMKVKCTGRILEVPVGRGLLGRVVNTLGEPIDGKGSIENDGFSAVEAIAPGVIERQSVDEPVQTGYKSVDAMIPIGRGQRELIIGDRQTGKTALAIDAIINQRDSGIKCVYVAIGQKASTVANVVRKLEEHDALANTIVVVATASESAALQYLAPYSGCAMGEYFRDRGEDALIIYDDLSKQAVAYRQISLLLRRPPGREAYPGDVFYLHSRLLERAARVNAEYVEAFTKGEVKGKTGSLTALPIIETQAGDVSAFVPTNVISITDGQIFLESSLFNAGIRPAVNPGISVSRVGGAAQTKIMKKLSGGIRTALAQYRELAAFSQFASDLDDATRKQLSHGQKVTELLKQKQYAPMSVAQQSLVLFAAERGYLGDVELAKVGSFEAALLAFADREHAELLQQINQTGAYNDEIEAKLKGILDTFKATQSW</sequence>
<accession>A7FPE2</accession>
<protein>
    <recommendedName>
        <fullName evidence="1">ATP synthase subunit alpha</fullName>
        <ecNumber evidence="1">7.1.2.2</ecNumber>
    </recommendedName>
    <alternativeName>
        <fullName evidence="1">ATP synthase F1 sector subunit alpha</fullName>
    </alternativeName>
    <alternativeName>
        <fullName evidence="1">F-ATPase subunit alpha</fullName>
    </alternativeName>
</protein>
<feature type="chain" id="PRO_1000067721" description="ATP synthase subunit alpha">
    <location>
        <begin position="1"/>
        <end position="513"/>
    </location>
</feature>
<feature type="binding site" evidence="1">
    <location>
        <begin position="169"/>
        <end position="176"/>
    </location>
    <ligand>
        <name>ATP</name>
        <dbReference type="ChEBI" id="CHEBI:30616"/>
    </ligand>
</feature>
<feature type="site" description="Required for activity" evidence="1">
    <location>
        <position position="373"/>
    </location>
</feature>
<dbReference type="EC" id="7.1.2.2" evidence="1"/>
<dbReference type="EMBL" id="CP000720">
    <property type="protein sequence ID" value="ABS46889.1"/>
    <property type="molecule type" value="Genomic_DNA"/>
</dbReference>
<dbReference type="RefSeq" id="WP_002220758.1">
    <property type="nucleotide sequence ID" value="NC_009708.1"/>
</dbReference>
<dbReference type="SMR" id="A7FPE2"/>
<dbReference type="GeneID" id="96663461"/>
<dbReference type="KEGG" id="ypi:YpsIP31758_4178"/>
<dbReference type="HOGENOM" id="CLU_010091_2_1_6"/>
<dbReference type="Proteomes" id="UP000002412">
    <property type="component" value="Chromosome"/>
</dbReference>
<dbReference type="GO" id="GO:0005886">
    <property type="term" value="C:plasma membrane"/>
    <property type="evidence" value="ECO:0007669"/>
    <property type="project" value="UniProtKB-SubCell"/>
</dbReference>
<dbReference type="GO" id="GO:0045259">
    <property type="term" value="C:proton-transporting ATP synthase complex"/>
    <property type="evidence" value="ECO:0007669"/>
    <property type="project" value="UniProtKB-KW"/>
</dbReference>
<dbReference type="GO" id="GO:0043531">
    <property type="term" value="F:ADP binding"/>
    <property type="evidence" value="ECO:0007669"/>
    <property type="project" value="TreeGrafter"/>
</dbReference>
<dbReference type="GO" id="GO:0005524">
    <property type="term" value="F:ATP binding"/>
    <property type="evidence" value="ECO:0007669"/>
    <property type="project" value="UniProtKB-UniRule"/>
</dbReference>
<dbReference type="GO" id="GO:0046933">
    <property type="term" value="F:proton-transporting ATP synthase activity, rotational mechanism"/>
    <property type="evidence" value="ECO:0007669"/>
    <property type="project" value="UniProtKB-UniRule"/>
</dbReference>
<dbReference type="CDD" id="cd18113">
    <property type="entry name" value="ATP-synt_F1_alpha_C"/>
    <property type="match status" value="1"/>
</dbReference>
<dbReference type="CDD" id="cd18116">
    <property type="entry name" value="ATP-synt_F1_alpha_N"/>
    <property type="match status" value="1"/>
</dbReference>
<dbReference type="CDD" id="cd01132">
    <property type="entry name" value="F1-ATPase_alpha_CD"/>
    <property type="match status" value="1"/>
</dbReference>
<dbReference type="FunFam" id="1.20.150.20:FF:000001">
    <property type="entry name" value="ATP synthase subunit alpha"/>
    <property type="match status" value="1"/>
</dbReference>
<dbReference type="FunFam" id="2.40.30.20:FF:000001">
    <property type="entry name" value="ATP synthase subunit alpha"/>
    <property type="match status" value="1"/>
</dbReference>
<dbReference type="FunFam" id="3.40.50.300:FF:000002">
    <property type="entry name" value="ATP synthase subunit alpha"/>
    <property type="match status" value="1"/>
</dbReference>
<dbReference type="Gene3D" id="2.40.30.20">
    <property type="match status" value="1"/>
</dbReference>
<dbReference type="Gene3D" id="1.20.150.20">
    <property type="entry name" value="ATP synthase alpha/beta chain, C-terminal domain"/>
    <property type="match status" value="1"/>
</dbReference>
<dbReference type="Gene3D" id="3.40.50.300">
    <property type="entry name" value="P-loop containing nucleotide triphosphate hydrolases"/>
    <property type="match status" value="1"/>
</dbReference>
<dbReference type="HAMAP" id="MF_01346">
    <property type="entry name" value="ATP_synth_alpha_bact"/>
    <property type="match status" value="1"/>
</dbReference>
<dbReference type="InterPro" id="IPR023366">
    <property type="entry name" value="ATP_synth_asu-like_sf"/>
</dbReference>
<dbReference type="InterPro" id="IPR000793">
    <property type="entry name" value="ATP_synth_asu_C"/>
</dbReference>
<dbReference type="InterPro" id="IPR038376">
    <property type="entry name" value="ATP_synth_asu_C_sf"/>
</dbReference>
<dbReference type="InterPro" id="IPR033732">
    <property type="entry name" value="ATP_synth_F1_a_nt-bd_dom"/>
</dbReference>
<dbReference type="InterPro" id="IPR005294">
    <property type="entry name" value="ATP_synth_F1_asu"/>
</dbReference>
<dbReference type="InterPro" id="IPR020003">
    <property type="entry name" value="ATPase_a/bsu_AS"/>
</dbReference>
<dbReference type="InterPro" id="IPR004100">
    <property type="entry name" value="ATPase_F1/V1/A1_a/bsu_N"/>
</dbReference>
<dbReference type="InterPro" id="IPR036121">
    <property type="entry name" value="ATPase_F1/V1/A1_a/bsu_N_sf"/>
</dbReference>
<dbReference type="InterPro" id="IPR000194">
    <property type="entry name" value="ATPase_F1/V1/A1_a/bsu_nucl-bd"/>
</dbReference>
<dbReference type="InterPro" id="IPR027417">
    <property type="entry name" value="P-loop_NTPase"/>
</dbReference>
<dbReference type="NCBIfam" id="TIGR00962">
    <property type="entry name" value="atpA"/>
    <property type="match status" value="1"/>
</dbReference>
<dbReference type="NCBIfam" id="NF009884">
    <property type="entry name" value="PRK13343.1"/>
    <property type="match status" value="1"/>
</dbReference>
<dbReference type="PANTHER" id="PTHR48082">
    <property type="entry name" value="ATP SYNTHASE SUBUNIT ALPHA, MITOCHONDRIAL"/>
    <property type="match status" value="1"/>
</dbReference>
<dbReference type="PANTHER" id="PTHR48082:SF2">
    <property type="entry name" value="ATP SYNTHASE SUBUNIT ALPHA, MITOCHONDRIAL"/>
    <property type="match status" value="1"/>
</dbReference>
<dbReference type="Pfam" id="PF00006">
    <property type="entry name" value="ATP-synt_ab"/>
    <property type="match status" value="1"/>
</dbReference>
<dbReference type="Pfam" id="PF00306">
    <property type="entry name" value="ATP-synt_ab_C"/>
    <property type="match status" value="1"/>
</dbReference>
<dbReference type="Pfam" id="PF02874">
    <property type="entry name" value="ATP-synt_ab_N"/>
    <property type="match status" value="1"/>
</dbReference>
<dbReference type="SUPFAM" id="SSF47917">
    <property type="entry name" value="C-terminal domain of alpha and beta subunits of F1 ATP synthase"/>
    <property type="match status" value="1"/>
</dbReference>
<dbReference type="SUPFAM" id="SSF50615">
    <property type="entry name" value="N-terminal domain of alpha and beta subunits of F1 ATP synthase"/>
    <property type="match status" value="1"/>
</dbReference>
<dbReference type="SUPFAM" id="SSF52540">
    <property type="entry name" value="P-loop containing nucleoside triphosphate hydrolases"/>
    <property type="match status" value="1"/>
</dbReference>
<dbReference type="PROSITE" id="PS00152">
    <property type="entry name" value="ATPASE_ALPHA_BETA"/>
    <property type="match status" value="1"/>
</dbReference>
<evidence type="ECO:0000255" key="1">
    <source>
        <dbReference type="HAMAP-Rule" id="MF_01346"/>
    </source>
</evidence>
<name>ATPA_YERP3</name>
<organism>
    <name type="scientific">Yersinia pseudotuberculosis serotype O:1b (strain IP 31758)</name>
    <dbReference type="NCBI Taxonomy" id="349747"/>
    <lineage>
        <taxon>Bacteria</taxon>
        <taxon>Pseudomonadati</taxon>
        <taxon>Pseudomonadota</taxon>
        <taxon>Gammaproteobacteria</taxon>
        <taxon>Enterobacterales</taxon>
        <taxon>Yersiniaceae</taxon>
        <taxon>Yersinia</taxon>
    </lineage>
</organism>
<comment type="function">
    <text evidence="1">Produces ATP from ADP in the presence of a proton gradient across the membrane. The alpha chain is a regulatory subunit.</text>
</comment>
<comment type="catalytic activity">
    <reaction evidence="1">
        <text>ATP + H2O + 4 H(+)(in) = ADP + phosphate + 5 H(+)(out)</text>
        <dbReference type="Rhea" id="RHEA:57720"/>
        <dbReference type="ChEBI" id="CHEBI:15377"/>
        <dbReference type="ChEBI" id="CHEBI:15378"/>
        <dbReference type="ChEBI" id="CHEBI:30616"/>
        <dbReference type="ChEBI" id="CHEBI:43474"/>
        <dbReference type="ChEBI" id="CHEBI:456216"/>
        <dbReference type="EC" id="7.1.2.2"/>
    </reaction>
</comment>
<comment type="subunit">
    <text evidence="1">F-type ATPases have 2 components, CF(1) - the catalytic core - and CF(0) - the membrane proton channel. CF(1) has five subunits: alpha(3), beta(3), gamma(1), delta(1), epsilon(1). CF(0) has three main subunits: a(1), b(2) and c(9-12). The alpha and beta chains form an alternating ring which encloses part of the gamma chain. CF(1) is attached to CF(0) by a central stalk formed by the gamma and epsilon chains, while a peripheral stalk is formed by the delta and b chains.</text>
</comment>
<comment type="subcellular location">
    <subcellularLocation>
        <location evidence="1">Cell inner membrane</location>
        <topology evidence="1">Peripheral membrane protein</topology>
    </subcellularLocation>
</comment>
<comment type="similarity">
    <text evidence="1">Belongs to the ATPase alpha/beta chains family.</text>
</comment>
<reference key="1">
    <citation type="journal article" date="2007" name="PLoS Genet.">
        <title>The complete genome sequence of Yersinia pseudotuberculosis IP31758, the causative agent of Far East scarlet-like fever.</title>
        <authorList>
            <person name="Eppinger M."/>
            <person name="Rosovitz M.J."/>
            <person name="Fricke W.F."/>
            <person name="Rasko D.A."/>
            <person name="Kokorina G."/>
            <person name="Fayolle C."/>
            <person name="Lindler L.E."/>
            <person name="Carniel E."/>
            <person name="Ravel J."/>
        </authorList>
    </citation>
    <scope>NUCLEOTIDE SEQUENCE [LARGE SCALE GENOMIC DNA]</scope>
    <source>
        <strain>IP 31758</strain>
    </source>
</reference>
<proteinExistence type="inferred from homology"/>
<keyword id="KW-0066">ATP synthesis</keyword>
<keyword id="KW-0067">ATP-binding</keyword>
<keyword id="KW-0997">Cell inner membrane</keyword>
<keyword id="KW-1003">Cell membrane</keyword>
<keyword id="KW-0139">CF(1)</keyword>
<keyword id="KW-0375">Hydrogen ion transport</keyword>
<keyword id="KW-0406">Ion transport</keyword>
<keyword id="KW-0472">Membrane</keyword>
<keyword id="KW-0547">Nucleotide-binding</keyword>
<keyword id="KW-1278">Translocase</keyword>
<keyword id="KW-0813">Transport</keyword>